<reference key="1">
    <citation type="journal article" date="2002" name="Proc. Natl. Acad. Sci. U.S.A.">
        <title>Complete genome sequence of Clostridium perfringens, an anaerobic flesh-eater.</title>
        <authorList>
            <person name="Shimizu T."/>
            <person name="Ohtani K."/>
            <person name="Hirakawa H."/>
            <person name="Ohshima K."/>
            <person name="Yamashita A."/>
            <person name="Shiba T."/>
            <person name="Ogasawara N."/>
            <person name="Hattori M."/>
            <person name="Kuhara S."/>
            <person name="Hayashi H."/>
        </authorList>
    </citation>
    <scope>NUCLEOTIDE SEQUENCE [LARGE SCALE GENOMIC DNA]</scope>
    <source>
        <strain>13 / Type A</strain>
    </source>
</reference>
<gene>
    <name evidence="1" type="primary">atpE</name>
    <name type="ordered locus">CPE1641</name>
</gene>
<name>VATE_CLOPE</name>
<feature type="chain" id="PRO_0000322516" description="V-type ATP synthase subunit E">
    <location>
        <begin position="1"/>
        <end position="198"/>
    </location>
</feature>
<dbReference type="EMBL" id="BA000016">
    <property type="protein sequence ID" value="BAB81347.1"/>
    <property type="molecule type" value="Genomic_DNA"/>
</dbReference>
<dbReference type="RefSeq" id="WP_003449544.1">
    <property type="nucleotide sequence ID" value="NC_003366.1"/>
</dbReference>
<dbReference type="SMR" id="Q8XJW2"/>
<dbReference type="STRING" id="195102.gene:10490905"/>
<dbReference type="KEGG" id="cpe:CPE1641"/>
<dbReference type="HOGENOM" id="CLU_105846_0_0_9"/>
<dbReference type="Proteomes" id="UP000000818">
    <property type="component" value="Chromosome"/>
</dbReference>
<dbReference type="GO" id="GO:0033178">
    <property type="term" value="C:proton-transporting two-sector ATPase complex, catalytic domain"/>
    <property type="evidence" value="ECO:0007669"/>
    <property type="project" value="InterPro"/>
</dbReference>
<dbReference type="GO" id="GO:0005524">
    <property type="term" value="F:ATP binding"/>
    <property type="evidence" value="ECO:0007669"/>
    <property type="project" value="UniProtKB-UniRule"/>
</dbReference>
<dbReference type="GO" id="GO:0046933">
    <property type="term" value="F:proton-transporting ATP synthase activity, rotational mechanism"/>
    <property type="evidence" value="ECO:0007669"/>
    <property type="project" value="UniProtKB-UniRule"/>
</dbReference>
<dbReference type="GO" id="GO:0046961">
    <property type="term" value="F:proton-transporting ATPase activity, rotational mechanism"/>
    <property type="evidence" value="ECO:0007669"/>
    <property type="project" value="InterPro"/>
</dbReference>
<dbReference type="GO" id="GO:0042777">
    <property type="term" value="P:proton motive force-driven plasma membrane ATP synthesis"/>
    <property type="evidence" value="ECO:0007669"/>
    <property type="project" value="UniProtKB-UniRule"/>
</dbReference>
<dbReference type="Gene3D" id="3.30.2320.30">
    <property type="entry name" value="ATP synthase, E subunit, C-terminal"/>
    <property type="match status" value="1"/>
</dbReference>
<dbReference type="Gene3D" id="1.20.5.620">
    <property type="entry name" value="F1F0 ATP synthase subunit B, membrane domain"/>
    <property type="match status" value="1"/>
</dbReference>
<dbReference type="HAMAP" id="MF_00311">
    <property type="entry name" value="ATP_synth_E_arch"/>
    <property type="match status" value="1"/>
</dbReference>
<dbReference type="InterPro" id="IPR038495">
    <property type="entry name" value="ATPase_E_C"/>
</dbReference>
<dbReference type="InterPro" id="IPR002842">
    <property type="entry name" value="ATPase_V1_Esu"/>
</dbReference>
<dbReference type="Pfam" id="PF01991">
    <property type="entry name" value="vATP-synt_E"/>
    <property type="match status" value="1"/>
</dbReference>
<dbReference type="SUPFAM" id="SSF160527">
    <property type="entry name" value="V-type ATPase subunit E-like"/>
    <property type="match status" value="1"/>
</dbReference>
<comment type="function">
    <text evidence="1">Produces ATP from ADP in the presence of a proton gradient across the membrane.</text>
</comment>
<comment type="similarity">
    <text evidence="1">Belongs to the V-ATPase E subunit family.</text>
</comment>
<sequence length="198" mass="22424">MSNLNNLTSKILNDAEEKKKYILADAEAQKDKIISKKTNRAEADKEEIITKANIEAEVKKARIISNAKLSVRNDMLRAKQDVISKVFNEAIEKLQNLSNGDYKYYVISTLDSLELEGTEVIIINEKDKDIFSNEFLEALNKELESKGKKGSITLNMEGKFNGGFILDRNGIQINNTFEALINSLRGELEFEVNKVLFD</sequence>
<keyword id="KW-0066">ATP synthesis</keyword>
<keyword id="KW-0375">Hydrogen ion transport</keyword>
<keyword id="KW-0406">Ion transport</keyword>
<keyword id="KW-1185">Reference proteome</keyword>
<keyword id="KW-0813">Transport</keyword>
<accession>Q8XJW2</accession>
<proteinExistence type="inferred from homology"/>
<protein>
    <recommendedName>
        <fullName>V-type ATP synthase subunit E</fullName>
    </recommendedName>
    <alternativeName>
        <fullName evidence="1">V-ATPase subunit E</fullName>
    </alternativeName>
</protein>
<organism>
    <name type="scientific">Clostridium perfringens (strain 13 / Type A)</name>
    <dbReference type="NCBI Taxonomy" id="195102"/>
    <lineage>
        <taxon>Bacteria</taxon>
        <taxon>Bacillati</taxon>
        <taxon>Bacillota</taxon>
        <taxon>Clostridia</taxon>
        <taxon>Eubacteriales</taxon>
        <taxon>Clostridiaceae</taxon>
        <taxon>Clostridium</taxon>
    </lineage>
</organism>
<evidence type="ECO:0000255" key="1">
    <source>
        <dbReference type="HAMAP-Rule" id="MF_00311"/>
    </source>
</evidence>